<name>ILVD_FRAT1</name>
<accession>Q14II4</accession>
<feature type="chain" id="PRO_1000089385" description="Dihydroxy-acid dehydratase">
    <location>
        <begin position="1"/>
        <end position="551"/>
    </location>
</feature>
<feature type="active site" description="Proton acceptor" evidence="1">
    <location>
        <position position="474"/>
    </location>
</feature>
<feature type="binding site" evidence="1">
    <location>
        <position position="52"/>
    </location>
    <ligand>
        <name>[2Fe-2S] cluster</name>
        <dbReference type="ChEBI" id="CHEBI:190135"/>
    </ligand>
</feature>
<feature type="binding site" evidence="1">
    <location>
        <position position="84"/>
    </location>
    <ligand>
        <name>Mg(2+)</name>
        <dbReference type="ChEBI" id="CHEBI:18420"/>
    </ligand>
</feature>
<feature type="binding site" evidence="1">
    <location>
        <position position="125"/>
    </location>
    <ligand>
        <name>[2Fe-2S] cluster</name>
        <dbReference type="ChEBI" id="CHEBI:190135"/>
    </ligand>
</feature>
<feature type="binding site" evidence="1">
    <location>
        <position position="126"/>
    </location>
    <ligand>
        <name>Mg(2+)</name>
        <dbReference type="ChEBI" id="CHEBI:18420"/>
    </ligand>
</feature>
<feature type="binding site" description="via carbamate group" evidence="1">
    <location>
        <position position="127"/>
    </location>
    <ligand>
        <name>Mg(2+)</name>
        <dbReference type="ChEBI" id="CHEBI:18420"/>
    </ligand>
</feature>
<feature type="binding site" evidence="1">
    <location>
        <position position="197"/>
    </location>
    <ligand>
        <name>[2Fe-2S] cluster</name>
        <dbReference type="ChEBI" id="CHEBI:190135"/>
    </ligand>
</feature>
<feature type="binding site" evidence="1">
    <location>
        <position position="448"/>
    </location>
    <ligand>
        <name>Mg(2+)</name>
        <dbReference type="ChEBI" id="CHEBI:18420"/>
    </ligand>
</feature>
<feature type="modified residue" description="N6-carboxylysine" evidence="1">
    <location>
        <position position="127"/>
    </location>
</feature>
<protein>
    <recommendedName>
        <fullName evidence="1">Dihydroxy-acid dehydratase</fullName>
        <shortName evidence="1">DAD</shortName>
        <ecNumber evidence="1">4.2.1.9</ecNumber>
    </recommendedName>
</protein>
<gene>
    <name evidence="1" type="primary">ilvD</name>
    <name type="ordered locus">FTF0640</name>
</gene>
<sequence length="551" mass="59003">MKKVLNKYSRRLTEDKSQGASQAMLYGTEMNDADMHKPQIGIGSVWYEGNTCNMHLNQLAQFVKDSVEKENLKGMRFNTIGVSDGISMGTDGMSYSLQSRDLIADSIETVMSAHWYDGLVSIPGCDKNMPGCMMALGRLNRPGFVIYGGTIQAGVMRGKPIDIVTAFQSYGACLSGQITEQERQETIKKACPGAGACGGMYTANTMACAIEALGMSLPFSSSTSATSVEKVQECDKAGETIKNLLELDIKPRDIMTRKAFENAMVLITVMGGSTNAVLHLLAMASSVDVDLSIDDFQEIANKTPVLADFKPSGKYVKANLHAIGGTPAVMKMLLKAGMLHGDCLTVTGKTLAENLENVADLPEDNTIIHKLDNPIKKTGHLQILKGNVAPEGSVAKITGKEGEIFEGVANVFDSEEEMVAAVETGKVKKGDVIVIRYEGPKGGPGMPEMLKPTSLIMGAGLGQDVALITDGRFSGGSHGFIVGHITPEAYEGGMIALLENGDKITIDAINNVINVDLSDQEIAQRKSKWRASKQKASRGTLKKYIKTVSSA</sequence>
<dbReference type="EC" id="4.2.1.9" evidence="1"/>
<dbReference type="EMBL" id="AM286280">
    <property type="protein sequence ID" value="CAL08656.1"/>
    <property type="molecule type" value="Genomic_DNA"/>
</dbReference>
<dbReference type="RefSeq" id="WP_003020386.1">
    <property type="nucleotide sequence ID" value="NC_008245.1"/>
</dbReference>
<dbReference type="SMR" id="Q14II4"/>
<dbReference type="KEGG" id="ftf:FTF0640"/>
<dbReference type="HOGENOM" id="CLU_014271_4_1_6"/>
<dbReference type="UniPathway" id="UPA00047">
    <property type="reaction ID" value="UER00057"/>
</dbReference>
<dbReference type="UniPathway" id="UPA00049">
    <property type="reaction ID" value="UER00061"/>
</dbReference>
<dbReference type="GO" id="GO:0051537">
    <property type="term" value="F:2 iron, 2 sulfur cluster binding"/>
    <property type="evidence" value="ECO:0007669"/>
    <property type="project" value="UniProtKB-UniRule"/>
</dbReference>
<dbReference type="GO" id="GO:0004160">
    <property type="term" value="F:dihydroxy-acid dehydratase activity"/>
    <property type="evidence" value="ECO:0007669"/>
    <property type="project" value="UniProtKB-UniRule"/>
</dbReference>
<dbReference type="GO" id="GO:0000287">
    <property type="term" value="F:magnesium ion binding"/>
    <property type="evidence" value="ECO:0007669"/>
    <property type="project" value="UniProtKB-UniRule"/>
</dbReference>
<dbReference type="GO" id="GO:0009097">
    <property type="term" value="P:isoleucine biosynthetic process"/>
    <property type="evidence" value="ECO:0007669"/>
    <property type="project" value="UniProtKB-UniRule"/>
</dbReference>
<dbReference type="GO" id="GO:0009099">
    <property type="term" value="P:L-valine biosynthetic process"/>
    <property type="evidence" value="ECO:0007669"/>
    <property type="project" value="UniProtKB-UniRule"/>
</dbReference>
<dbReference type="FunFam" id="3.50.30.80:FF:000001">
    <property type="entry name" value="Dihydroxy-acid dehydratase"/>
    <property type="match status" value="1"/>
</dbReference>
<dbReference type="Gene3D" id="3.50.30.80">
    <property type="entry name" value="IlvD/EDD C-terminal domain-like"/>
    <property type="match status" value="1"/>
</dbReference>
<dbReference type="HAMAP" id="MF_00012">
    <property type="entry name" value="IlvD"/>
    <property type="match status" value="1"/>
</dbReference>
<dbReference type="InterPro" id="IPR050165">
    <property type="entry name" value="DHAD_IlvD/Edd"/>
</dbReference>
<dbReference type="InterPro" id="IPR042096">
    <property type="entry name" value="Dihydro-acid_dehy_C"/>
</dbReference>
<dbReference type="InterPro" id="IPR004404">
    <property type="entry name" value="DihydroxyA_deHydtase"/>
</dbReference>
<dbReference type="InterPro" id="IPR020558">
    <property type="entry name" value="DiOHA_6PGluconate_deHydtase_CS"/>
</dbReference>
<dbReference type="InterPro" id="IPR056740">
    <property type="entry name" value="ILV_EDD_C"/>
</dbReference>
<dbReference type="InterPro" id="IPR000581">
    <property type="entry name" value="ILV_EDD_N"/>
</dbReference>
<dbReference type="InterPro" id="IPR037237">
    <property type="entry name" value="IlvD/EDD_N"/>
</dbReference>
<dbReference type="NCBIfam" id="TIGR00110">
    <property type="entry name" value="ilvD"/>
    <property type="match status" value="1"/>
</dbReference>
<dbReference type="NCBIfam" id="NF002068">
    <property type="entry name" value="PRK00911.1"/>
    <property type="match status" value="1"/>
</dbReference>
<dbReference type="PANTHER" id="PTHR21000">
    <property type="entry name" value="DIHYDROXY-ACID DEHYDRATASE DAD"/>
    <property type="match status" value="1"/>
</dbReference>
<dbReference type="PANTHER" id="PTHR21000:SF5">
    <property type="entry name" value="DIHYDROXY-ACID DEHYDRATASE, MITOCHONDRIAL"/>
    <property type="match status" value="1"/>
</dbReference>
<dbReference type="Pfam" id="PF24877">
    <property type="entry name" value="ILV_EDD_C"/>
    <property type="match status" value="1"/>
</dbReference>
<dbReference type="Pfam" id="PF00920">
    <property type="entry name" value="ILVD_EDD_N"/>
    <property type="match status" value="1"/>
</dbReference>
<dbReference type="SUPFAM" id="SSF143975">
    <property type="entry name" value="IlvD/EDD N-terminal domain-like"/>
    <property type="match status" value="1"/>
</dbReference>
<dbReference type="SUPFAM" id="SSF52016">
    <property type="entry name" value="LeuD/IlvD-like"/>
    <property type="match status" value="1"/>
</dbReference>
<dbReference type="PROSITE" id="PS00886">
    <property type="entry name" value="ILVD_EDD_1"/>
    <property type="match status" value="1"/>
</dbReference>
<dbReference type="PROSITE" id="PS00887">
    <property type="entry name" value="ILVD_EDD_2"/>
    <property type="match status" value="1"/>
</dbReference>
<proteinExistence type="inferred from homology"/>
<comment type="function">
    <text evidence="1">Functions in the biosynthesis of branched-chain amino acids. Catalyzes the dehydration of (2R,3R)-2,3-dihydroxy-3-methylpentanoate (2,3-dihydroxy-3-methylvalerate) into 2-oxo-3-methylpentanoate (2-oxo-3-methylvalerate) and of (2R)-2,3-dihydroxy-3-methylbutanoate (2,3-dihydroxyisovalerate) into 2-oxo-3-methylbutanoate (2-oxoisovalerate), the penultimate precursor to L-isoleucine and L-valine, respectively.</text>
</comment>
<comment type="catalytic activity">
    <reaction evidence="1">
        <text>(2R)-2,3-dihydroxy-3-methylbutanoate = 3-methyl-2-oxobutanoate + H2O</text>
        <dbReference type="Rhea" id="RHEA:24809"/>
        <dbReference type="ChEBI" id="CHEBI:11851"/>
        <dbReference type="ChEBI" id="CHEBI:15377"/>
        <dbReference type="ChEBI" id="CHEBI:49072"/>
        <dbReference type="EC" id="4.2.1.9"/>
    </reaction>
    <physiologicalReaction direction="left-to-right" evidence="1">
        <dbReference type="Rhea" id="RHEA:24810"/>
    </physiologicalReaction>
</comment>
<comment type="catalytic activity">
    <reaction evidence="1">
        <text>(2R,3R)-2,3-dihydroxy-3-methylpentanoate = (S)-3-methyl-2-oxopentanoate + H2O</text>
        <dbReference type="Rhea" id="RHEA:27694"/>
        <dbReference type="ChEBI" id="CHEBI:15377"/>
        <dbReference type="ChEBI" id="CHEBI:35146"/>
        <dbReference type="ChEBI" id="CHEBI:49258"/>
        <dbReference type="EC" id="4.2.1.9"/>
    </reaction>
    <physiologicalReaction direction="left-to-right" evidence="1">
        <dbReference type="Rhea" id="RHEA:27695"/>
    </physiologicalReaction>
</comment>
<comment type="cofactor">
    <cofactor evidence="1">
        <name>[2Fe-2S] cluster</name>
        <dbReference type="ChEBI" id="CHEBI:190135"/>
    </cofactor>
    <text evidence="1">Binds 1 [2Fe-2S] cluster per subunit. This cluster acts as a Lewis acid cofactor.</text>
</comment>
<comment type="cofactor">
    <cofactor evidence="1">
        <name>Mg(2+)</name>
        <dbReference type="ChEBI" id="CHEBI:18420"/>
    </cofactor>
</comment>
<comment type="pathway">
    <text evidence="1">Amino-acid biosynthesis; L-isoleucine biosynthesis; L-isoleucine from 2-oxobutanoate: step 3/4.</text>
</comment>
<comment type="pathway">
    <text evidence="1">Amino-acid biosynthesis; L-valine biosynthesis; L-valine from pyruvate: step 3/4.</text>
</comment>
<comment type="subunit">
    <text evidence="1">Homodimer.</text>
</comment>
<comment type="similarity">
    <text evidence="1">Belongs to the IlvD/Edd family.</text>
</comment>
<organism>
    <name type="scientific">Francisella tularensis subsp. tularensis (strain FSC 198)</name>
    <dbReference type="NCBI Taxonomy" id="393115"/>
    <lineage>
        <taxon>Bacteria</taxon>
        <taxon>Pseudomonadati</taxon>
        <taxon>Pseudomonadota</taxon>
        <taxon>Gammaproteobacteria</taxon>
        <taxon>Thiotrichales</taxon>
        <taxon>Francisellaceae</taxon>
        <taxon>Francisella</taxon>
    </lineage>
</organism>
<keyword id="KW-0001">2Fe-2S</keyword>
<keyword id="KW-0028">Amino-acid biosynthesis</keyword>
<keyword id="KW-0100">Branched-chain amino acid biosynthesis</keyword>
<keyword id="KW-0408">Iron</keyword>
<keyword id="KW-0411">Iron-sulfur</keyword>
<keyword id="KW-0456">Lyase</keyword>
<keyword id="KW-0460">Magnesium</keyword>
<keyword id="KW-0479">Metal-binding</keyword>
<reference key="1">
    <citation type="journal article" date="2007" name="PLoS ONE">
        <title>Genome sequencing shows that European isolates of Francisella tularensis subspecies tularensis are almost identical to US laboratory strain Schu S4.</title>
        <authorList>
            <person name="Chaudhuri R.R."/>
            <person name="Ren C.-P."/>
            <person name="Desmond L."/>
            <person name="Vincent G.A."/>
            <person name="Silman N.J."/>
            <person name="Brehm J.K."/>
            <person name="Elmore M.J."/>
            <person name="Hudson M.J."/>
            <person name="Forsman M."/>
            <person name="Isherwood K.E."/>
            <person name="Gurycova D."/>
            <person name="Minton N.P."/>
            <person name="Titball R.W."/>
            <person name="Pallen M.J."/>
            <person name="Vipond R."/>
        </authorList>
    </citation>
    <scope>NUCLEOTIDE SEQUENCE [LARGE SCALE GENOMIC DNA]</scope>
    <source>
        <strain>FSC 198</strain>
    </source>
</reference>
<evidence type="ECO:0000255" key="1">
    <source>
        <dbReference type="HAMAP-Rule" id="MF_00012"/>
    </source>
</evidence>